<geneLocation type="mitochondrion"/>
<sequence>MYNINRPISPHLTIYNTQKSSLFSIWHRISGVAMFTLIASPPLFLKLATFSYKSFNILDLMLNNSSLILPWFIVIISVIFLYHIINGIRHFLWDSVVNVNTESIIKDSNTLLALVFLIMLFKFIL</sequence>
<proteinExistence type="inferred from homology"/>
<evidence type="ECO:0000250" key="1"/>
<evidence type="ECO:0000255" key="2"/>
<evidence type="ECO:0000305" key="3"/>
<gene>
    <name type="primary">SDH3</name>
    <name type="synonym">SDHC</name>
</gene>
<feature type="chain" id="PRO_0000203520" description="Succinate dehydrogenase cytochrome b560 subunit">
    <location>
        <begin position="1"/>
        <end position="125"/>
    </location>
</feature>
<feature type="transmembrane region" description="Helical" evidence="2">
    <location>
        <begin position="29"/>
        <end position="49"/>
    </location>
</feature>
<feature type="transmembrane region" description="Helical" evidence="2">
    <location>
        <begin position="68"/>
        <end position="88"/>
    </location>
</feature>
<feature type="transmembrane region" description="Helical" evidence="2">
    <location>
        <begin position="104"/>
        <end position="124"/>
    </location>
</feature>
<feature type="binding site" description="axial binding residue" evidence="1">
    <location>
        <position position="83"/>
    </location>
    <ligand>
        <name>heme</name>
        <dbReference type="ChEBI" id="CHEBI:30413"/>
        <note>ligand shared with second transmembrane subunit</note>
    </ligand>
    <ligandPart>
        <name>Fe</name>
        <dbReference type="ChEBI" id="CHEBI:18248"/>
    </ligandPart>
</feature>
<organism>
    <name type="scientific">Porphyra purpurea</name>
    <name type="common">Red seaweed</name>
    <name type="synonym">Ulva purpurea</name>
    <dbReference type="NCBI Taxonomy" id="2787"/>
    <lineage>
        <taxon>Eukaryota</taxon>
        <taxon>Rhodophyta</taxon>
        <taxon>Bangiophyceae</taxon>
        <taxon>Bangiales</taxon>
        <taxon>Bangiaceae</taxon>
        <taxon>Porphyra</taxon>
    </lineage>
</organism>
<keyword id="KW-0249">Electron transport</keyword>
<keyword id="KW-0349">Heme</keyword>
<keyword id="KW-0408">Iron</keyword>
<keyword id="KW-0472">Membrane</keyword>
<keyword id="KW-0479">Metal-binding</keyword>
<keyword id="KW-0496">Mitochondrion</keyword>
<keyword id="KW-0999">Mitochondrion inner membrane</keyword>
<keyword id="KW-0812">Transmembrane</keyword>
<keyword id="KW-1133">Transmembrane helix</keyword>
<keyword id="KW-0813">Transport</keyword>
<keyword id="KW-0816">Tricarboxylic acid cycle</keyword>
<reference key="1">
    <citation type="journal article" date="1996" name="Proc. Natl. Acad. Sci. U.S.A.">
        <title>Genes encoding the same three subunits of respiratory complex II are present in the mitochondrial DNA of two phylogenetically distant eukaryotes.</title>
        <authorList>
            <person name="Burger G."/>
            <person name="Lang B.F."/>
            <person name="Reith M."/>
            <person name="Gray M.W."/>
        </authorList>
    </citation>
    <scope>NUCLEOTIDE SEQUENCE [GENOMIC DNA]</scope>
</reference>
<reference key="2">
    <citation type="journal article" date="1999" name="Plant Cell">
        <title>Complete sequence of the mitochondrial DNA of the red alga Porphyra purpurea. Cyanobacterial introns and shared ancestry of red and green algae.</title>
        <authorList>
            <person name="Burger G."/>
            <person name="Saint-Louis D."/>
            <person name="Gray M.W."/>
            <person name="Lang B.F."/>
        </authorList>
    </citation>
    <scope>NUCLEOTIDE SEQUENCE [GENOMIC DNA]</scope>
</reference>
<comment type="function">
    <text evidence="1">Membrane-anchoring subunit of succinate dehydrogenase (SDH) that is involved in complex II of the mitochondrial electron transport chain and is responsible for transferring electrons from succinate to ubiquinone (coenzyme Q).</text>
</comment>
<comment type="cofactor">
    <cofactor evidence="1">
        <name>heme</name>
        <dbReference type="ChEBI" id="CHEBI:30413"/>
    </cofactor>
    <text evidence="1">The heme is bound between the two transmembrane subunits.</text>
</comment>
<comment type="pathway">
    <text>Carbohydrate metabolism; tricarboxylic acid cycle.</text>
</comment>
<comment type="subunit">
    <text>Forms part of complex II containing four subunits: a 70 kDa flavoprotein (FP), a 27 kDa iron-sulfur protein (IP), a cytochrome B and a membrane-anchoring protein.</text>
</comment>
<comment type="subcellular location">
    <subcellularLocation>
        <location evidence="1">Mitochondrion inner membrane</location>
        <topology evidence="1">Multi-pass membrane protein</topology>
    </subcellularLocation>
</comment>
<comment type="similarity">
    <text evidence="3">Belongs to the cytochrome b560 family.</text>
</comment>
<name>C560_PORPU</name>
<accession>P80478</accession>
<protein>
    <recommendedName>
        <fullName>Succinate dehydrogenase cytochrome b560 subunit</fullName>
    </recommendedName>
    <alternativeName>
        <fullName>Succinate dehydrogenase, subunit III</fullName>
    </alternativeName>
</protein>
<dbReference type="EMBL" id="AF114794">
    <property type="protein sequence ID" value="AAD03124.1"/>
    <property type="molecule type" value="Genomic_DNA"/>
</dbReference>
<dbReference type="PIR" id="T11245">
    <property type="entry name" value="T11245"/>
</dbReference>
<dbReference type="RefSeq" id="NP_049321.1">
    <property type="nucleotide sequence ID" value="NC_002007.1"/>
</dbReference>
<dbReference type="SMR" id="P80478"/>
<dbReference type="GeneID" id="809804"/>
<dbReference type="UniPathway" id="UPA00223"/>
<dbReference type="GO" id="GO:0005743">
    <property type="term" value="C:mitochondrial inner membrane"/>
    <property type="evidence" value="ECO:0007669"/>
    <property type="project" value="UniProtKB-SubCell"/>
</dbReference>
<dbReference type="GO" id="GO:0009055">
    <property type="term" value="F:electron transfer activity"/>
    <property type="evidence" value="ECO:0007669"/>
    <property type="project" value="InterPro"/>
</dbReference>
<dbReference type="GO" id="GO:0046872">
    <property type="term" value="F:metal ion binding"/>
    <property type="evidence" value="ECO:0007669"/>
    <property type="project" value="UniProtKB-KW"/>
</dbReference>
<dbReference type="GO" id="GO:0006121">
    <property type="term" value="P:mitochondrial electron transport, succinate to ubiquinone"/>
    <property type="evidence" value="ECO:0007669"/>
    <property type="project" value="TreeGrafter"/>
</dbReference>
<dbReference type="GO" id="GO:0006099">
    <property type="term" value="P:tricarboxylic acid cycle"/>
    <property type="evidence" value="ECO:0007669"/>
    <property type="project" value="UniProtKB-UniPathway"/>
</dbReference>
<dbReference type="CDD" id="cd03499">
    <property type="entry name" value="SQR_TypeC_SdhC"/>
    <property type="match status" value="1"/>
</dbReference>
<dbReference type="Gene3D" id="1.20.1300.10">
    <property type="entry name" value="Fumarate reductase/succinate dehydrogenase, transmembrane subunit"/>
    <property type="match status" value="1"/>
</dbReference>
<dbReference type="InterPro" id="IPR034804">
    <property type="entry name" value="SQR/QFR_C/D"/>
</dbReference>
<dbReference type="InterPro" id="IPR018495">
    <property type="entry name" value="Succ_DH_cyt_bsu_CS"/>
</dbReference>
<dbReference type="InterPro" id="IPR014314">
    <property type="entry name" value="Succ_DH_cytb556"/>
</dbReference>
<dbReference type="InterPro" id="IPR000701">
    <property type="entry name" value="SuccDH_FuR_B_TM-su"/>
</dbReference>
<dbReference type="NCBIfam" id="TIGR02970">
    <property type="entry name" value="succ_dehyd_cytB"/>
    <property type="match status" value="1"/>
</dbReference>
<dbReference type="PANTHER" id="PTHR10978">
    <property type="entry name" value="SUCCINATE DEHYDROGENASE CYTOCHROME B560 SUBUNIT"/>
    <property type="match status" value="1"/>
</dbReference>
<dbReference type="PANTHER" id="PTHR10978:SF5">
    <property type="entry name" value="SUCCINATE DEHYDROGENASE CYTOCHROME B560 SUBUNIT, MITOCHONDRIAL"/>
    <property type="match status" value="1"/>
</dbReference>
<dbReference type="Pfam" id="PF01127">
    <property type="entry name" value="Sdh_cyt"/>
    <property type="match status" value="1"/>
</dbReference>
<dbReference type="PIRSF" id="PIRSF000178">
    <property type="entry name" value="SDH_cyt_b560"/>
    <property type="match status" value="1"/>
</dbReference>
<dbReference type="SUPFAM" id="SSF81343">
    <property type="entry name" value="Fumarate reductase respiratory complex transmembrane subunits"/>
    <property type="match status" value="1"/>
</dbReference>
<dbReference type="PROSITE" id="PS01000">
    <property type="entry name" value="SDH_CYT_1"/>
    <property type="match status" value="1"/>
</dbReference>
<dbReference type="PROSITE" id="PS01001">
    <property type="entry name" value="SDH_CYT_2"/>
    <property type="match status" value="1"/>
</dbReference>